<reference key="1">
    <citation type="journal article" date="1989" name="EMBO J.">
        <title>Nuclear and chloroplast mutations affect the synthesis or stability of the chloroplast psbC gene product in Chlamydomonas reinhardtii.</title>
        <authorList>
            <person name="Rochaix J.-D."/>
            <person name="Kuchka M."/>
            <person name="Mayfield S.P."/>
            <person name="Schirmer-Rahire M."/>
            <person name="Girard-Bascou J."/>
            <person name="Bennoun P."/>
        </authorList>
    </citation>
    <scope>NUCLEOTIDE SEQUENCE [GENOMIC DNA]</scope>
    <scope>MUTAGENESIS OF SER-261</scope>
    <source>
        <strain>137c / CC-125</strain>
    </source>
</reference>
<reference key="2">
    <citation type="journal article" date="2009" name="BMC Evol. Biol.">
        <title>Nucleotide diversity of the Chlamydomonas reinhardtii plastid genome: addressing the mutational-hazard hypothesis.</title>
        <authorList>
            <person name="Smith D.R."/>
            <person name="Lee R.W."/>
        </authorList>
    </citation>
    <scope>NUCLEOTIDE SEQUENCE [LARGE SCALE GENOMIC DNA]</scope>
    <source>
        <strain>CC-503</strain>
    </source>
</reference>
<reference key="3">
    <citation type="journal article" date="2000" name="Mol. Phylogenet. Evol.">
        <title>Origin and evolution of the colonial Volvocales (Chlorophyceae) as inferred from multiple, chloroplast gene sequences.</title>
        <authorList>
            <person name="Nozaki H."/>
            <person name="Misawa K."/>
            <person name="Kajita T."/>
            <person name="Kato M."/>
            <person name="Nohara S."/>
            <person name="Watanabe M.M."/>
        </authorList>
    </citation>
    <scope>NUCLEOTIDE SEQUENCE [GENOMIC DNA] OF 77-336</scope>
    <source>
        <strain>137c / CC-125</strain>
    </source>
</reference>
<reference key="4">
    <citation type="journal article" date="2002" name="Plant Cell">
        <title>The Chlamydomonas reinhardtii plastid chromosome: islands of genes in a sea of repeats.</title>
        <authorList>
            <person name="Maul J.E."/>
            <person name="Lilly J.W."/>
            <person name="Cui L."/>
            <person name="dePamphilis C.W."/>
            <person name="Miller W."/>
            <person name="Harris E.H."/>
            <person name="Stern D.B."/>
        </authorList>
    </citation>
    <scope>IDENTIFICATION</scope>
    <scope>COMPLETE PLASTID GENOME</scope>
</reference>
<reference key="5">
    <citation type="journal article" date="1991" name="J. Biol. Chem.">
        <title>Photosystem II particles from Chlamydomonas reinhardtii. Purification, molecular weight, small subunit composition, and protein phosphorylation.</title>
        <authorList>
            <person name="de Vitry C."/>
            <person name="Diner B.A."/>
            <person name="Popo J.-L."/>
        </authorList>
    </citation>
    <scope>SUBUNIT</scope>
    <scope>SUBCELLULAR LOCATION</scope>
    <scope>PHOSPHORYLATION</scope>
</reference>
<protein>
    <recommendedName>
        <fullName evidence="1">Photosystem II CP43 reaction center protein</fullName>
    </recommendedName>
    <alternativeName>
        <fullName evidence="1">PSII 43 kDa protein</fullName>
    </alternativeName>
    <alternativeName>
        <fullName evidence="1">Protein CP-43</fullName>
    </alternativeName>
    <alternativeName>
        <fullName evidence="4">Protein P6</fullName>
    </alternativeName>
</protein>
<sequence>METLFNGTLTVGGRDQETTGFAWWSGNARLINLSGKLLGAHVAHAGLIVFWAGAMNLFEVSHFVPEKPMYEQGLILLPHIATLGYGVGPGGEIIDTFPYFVSGVLHLISSAVLGFGGVYHSLIGPETLEESYPFFGYVWKDKNKMTNILGYHLIMLGLGAWLLVWKAMYFGGVYDTWAPGGGDVRVITNPTTNAAVIFGYLVKSPFGGDGWICSVDNMEDIIGGHIWIGTLEILGGIWHIYTTPWPWARRAFVWSGEAYLSYSLGAIGVMGFIACCMSWFNNTAYPSEFYGPTGPEASQSQAFTFLVRDQRLGANVASAQGPTGLGKYLMRSPTGEIIFGGETMRFWDFRGPWLEPLRGPNGLDLNKLKNDIQPWQERRAAEYMTHAPLGSLNSVGGVATEINAVNFVSPRSWLACSHFCLGFFFFIGHLWHAGRARAAAAGFEKGIDRFDEPVLSMRPLD</sequence>
<comment type="function">
    <text evidence="1">One of the components of the core complex of photosystem II (PSII). It binds chlorophyll and helps catalyze the primary light-induced photochemical processes of PSII. PSII is a light-driven water:plastoquinone oxidoreductase, using light energy to abstract electrons from H(2)O, generating O(2) and a proton gradient subsequently used for ATP formation.</text>
</comment>
<comment type="cofactor">
    <text evidence="1">Binds multiple chlorophylls and provides some of the ligands for the Ca-4Mn-5O cluster of the oxygen-evolving complex. It may also provide a ligand for a Cl- that is required for oxygen evolution. PSII binds additional chlorophylls, carotenoids and specific lipids.</text>
</comment>
<comment type="subunit">
    <text evidence="1 2">PSII is composed of 1 copy each of membrane proteins PsbA, PsbB, PsbC, PsbD, PsbE, PsbF, PsbH, PsbI, PsbJ, PsbK, PsbL, PsbM, PsbT, PsbX, PsbY, PsbZ, Psb30/Ycf12, at least 3 peripheral proteins of the oxygen-evolving complex and a large number of cofactors. It forms dimeric complexes.</text>
</comment>
<comment type="subcellular location">
    <subcellularLocation>
        <location evidence="1 2">Plastid</location>
        <location evidence="1 2">Chloroplast thylakoid membrane</location>
        <topology evidence="1">Multi-pass membrane protein</topology>
    </subcellularLocation>
</comment>
<comment type="PTM">
    <text evidence="2">Phosphorylated in vitro (PubMed:1885590).</text>
</comment>
<comment type="similarity">
    <text evidence="1">Belongs to the PsbB/PsbC family. PsbC subfamily.</text>
</comment>
<gene>
    <name evidence="1" type="primary">psbC</name>
</gene>
<accession>P10898</accession>
<accession>B7U1K6</accession>
<accession>Q9GGZ0</accession>
<organism>
    <name type="scientific">Chlamydomonas reinhardtii</name>
    <name type="common">Chlamydomonas smithii</name>
    <dbReference type="NCBI Taxonomy" id="3055"/>
    <lineage>
        <taxon>Eukaryota</taxon>
        <taxon>Viridiplantae</taxon>
        <taxon>Chlorophyta</taxon>
        <taxon>core chlorophytes</taxon>
        <taxon>Chlorophyceae</taxon>
        <taxon>CS clade</taxon>
        <taxon>Chlamydomonadales</taxon>
        <taxon>Chlamydomonadaceae</taxon>
        <taxon>Chlamydomonas</taxon>
    </lineage>
</organism>
<proteinExistence type="evidence at protein level"/>
<dbReference type="EMBL" id="X13879">
    <property type="protein sequence ID" value="CAA32084.2"/>
    <property type="molecule type" value="Genomic_DNA"/>
</dbReference>
<dbReference type="EMBL" id="FJ423446">
    <property type="protein sequence ID" value="ACJ50153.1"/>
    <property type="molecule type" value="Genomic_DNA"/>
</dbReference>
<dbReference type="EMBL" id="AB044528">
    <property type="protein sequence ID" value="BAB18454.1"/>
    <property type="molecule type" value="Genomic_DNA"/>
</dbReference>
<dbReference type="EMBL" id="BK000554">
    <property type="protein sequence ID" value="DAA00966.1"/>
    <property type="molecule type" value="Genomic_DNA"/>
</dbReference>
<dbReference type="PIR" id="S04025">
    <property type="entry name" value="S04025"/>
</dbReference>
<dbReference type="RefSeq" id="NP_958422.1">
    <property type="nucleotide sequence ID" value="NC_005353.1"/>
</dbReference>
<dbReference type="PDB" id="6KAC">
    <property type="method" value="EM"/>
    <property type="resolution" value="2.70 A"/>
    <property type="chains" value="C/c=1-461"/>
</dbReference>
<dbReference type="PDB" id="6KAD">
    <property type="method" value="EM"/>
    <property type="resolution" value="3.40 A"/>
    <property type="chains" value="C/c=1-461"/>
</dbReference>
<dbReference type="PDB" id="6KAF">
    <property type="method" value="EM"/>
    <property type="resolution" value="3.73 A"/>
    <property type="chains" value="C/c=1-461"/>
</dbReference>
<dbReference type="PDB" id="8KDE">
    <property type="method" value="EM"/>
    <property type="resolution" value="2.60 A"/>
    <property type="chains" value="C=1-461"/>
</dbReference>
<dbReference type="PDB" id="8R2I">
    <property type="method" value="EM"/>
    <property type="resolution" value="2.90 A"/>
    <property type="chains" value="C=21-443"/>
</dbReference>
<dbReference type="PDB" id="8ZEE">
    <property type="method" value="EM"/>
    <property type="resolution" value="2.90 A"/>
    <property type="chains" value="C=1-461"/>
</dbReference>
<dbReference type="PDBsum" id="6KAC"/>
<dbReference type="PDBsum" id="6KAD"/>
<dbReference type="PDBsum" id="6KAF"/>
<dbReference type="PDBsum" id="8KDE"/>
<dbReference type="PDBsum" id="8R2I"/>
<dbReference type="PDBsum" id="8ZEE"/>
<dbReference type="EMDB" id="EMD-18848"/>
<dbReference type="EMDB" id="EMD-37133"/>
<dbReference type="EMDB" id="EMD-60026"/>
<dbReference type="EMDB" id="EMD-9955"/>
<dbReference type="EMDB" id="EMD-9956"/>
<dbReference type="EMDB" id="EMD-9957"/>
<dbReference type="SMR" id="P10898"/>
<dbReference type="FunCoup" id="P10898">
    <property type="interactions" value="243"/>
</dbReference>
<dbReference type="STRING" id="3055.P10898"/>
<dbReference type="PaxDb" id="3055-DAA00966"/>
<dbReference type="GeneID" id="2716963"/>
<dbReference type="KEGG" id="cre:ChreCp066"/>
<dbReference type="eggNOG" id="ENOG502QR3X">
    <property type="taxonomic scope" value="Eukaryota"/>
</dbReference>
<dbReference type="HOGENOM" id="CLU_028310_1_1_1"/>
<dbReference type="InParanoid" id="P10898"/>
<dbReference type="BioCyc" id="CHLAMY:CHRECP066-MONOMER"/>
<dbReference type="BioCyc" id="MetaCyc:CHRECP066-MONOMER"/>
<dbReference type="Proteomes" id="UP000006906">
    <property type="component" value="Chloroplast"/>
</dbReference>
<dbReference type="GO" id="GO:0009535">
    <property type="term" value="C:chloroplast thylakoid membrane"/>
    <property type="evidence" value="ECO:0007669"/>
    <property type="project" value="UniProtKB-SubCell"/>
</dbReference>
<dbReference type="GO" id="GO:0009523">
    <property type="term" value="C:photosystem II"/>
    <property type="evidence" value="ECO:0007669"/>
    <property type="project" value="UniProtKB-KW"/>
</dbReference>
<dbReference type="GO" id="GO:0016168">
    <property type="term" value="F:chlorophyll binding"/>
    <property type="evidence" value="ECO:0007669"/>
    <property type="project" value="UniProtKB-UniRule"/>
</dbReference>
<dbReference type="GO" id="GO:0045156">
    <property type="term" value="F:electron transporter, transferring electrons within the cyclic electron transport pathway of photosynthesis activity"/>
    <property type="evidence" value="ECO:0007669"/>
    <property type="project" value="InterPro"/>
</dbReference>
<dbReference type="GO" id="GO:0046872">
    <property type="term" value="F:metal ion binding"/>
    <property type="evidence" value="ECO:0007669"/>
    <property type="project" value="UniProtKB-KW"/>
</dbReference>
<dbReference type="GO" id="GO:0009772">
    <property type="term" value="P:photosynthetic electron transport in photosystem II"/>
    <property type="evidence" value="ECO:0007669"/>
    <property type="project" value="InterPro"/>
</dbReference>
<dbReference type="FunFam" id="1.10.10.670:FF:000001">
    <property type="entry name" value="Photosystem II CP43 reaction center protein"/>
    <property type="match status" value="1"/>
</dbReference>
<dbReference type="Gene3D" id="1.10.10.670">
    <property type="entry name" value="photosystem ii from thermosynechococcus elongatus"/>
    <property type="match status" value="1"/>
</dbReference>
<dbReference type="HAMAP" id="MF_01496">
    <property type="entry name" value="PSII_PsbC_CP43"/>
    <property type="match status" value="1"/>
</dbReference>
<dbReference type="InterPro" id="IPR000932">
    <property type="entry name" value="PS_antenna-like"/>
</dbReference>
<dbReference type="InterPro" id="IPR036001">
    <property type="entry name" value="PS_II_antenna-like_sf"/>
</dbReference>
<dbReference type="InterPro" id="IPR005869">
    <property type="entry name" value="PSII_PsbC"/>
</dbReference>
<dbReference type="InterPro" id="IPR044900">
    <property type="entry name" value="PSII_PsbC_sf"/>
</dbReference>
<dbReference type="NCBIfam" id="TIGR01153">
    <property type="entry name" value="psbC"/>
    <property type="match status" value="1"/>
</dbReference>
<dbReference type="Pfam" id="PF00421">
    <property type="entry name" value="PSII"/>
    <property type="match status" value="1"/>
</dbReference>
<dbReference type="SUPFAM" id="SSF161077">
    <property type="entry name" value="Photosystem II antenna protein-like"/>
    <property type="match status" value="1"/>
</dbReference>
<name>PSBC_CHLRE</name>
<feature type="propeptide" id="PRO_0000431124" evidence="1">
    <location>
        <begin position="1"/>
        <end position="2"/>
    </location>
</feature>
<feature type="chain" id="PRO_0000077509" description="Photosystem II CP43 reaction center protein" evidence="1">
    <location>
        <begin position="3"/>
        <end position="461"/>
    </location>
</feature>
<feature type="transmembrane region" description="Helical" evidence="1">
    <location>
        <begin position="57"/>
        <end position="81"/>
    </location>
</feature>
<feature type="transmembrane region" description="Helical" evidence="1">
    <location>
        <begin position="122"/>
        <end position="143"/>
    </location>
</feature>
<feature type="transmembrane region" description="Helical" evidence="1">
    <location>
        <begin position="166"/>
        <end position="188"/>
    </location>
</feature>
<feature type="transmembrane region" description="Helical" evidence="1">
    <location>
        <begin position="243"/>
        <end position="263"/>
    </location>
</feature>
<feature type="transmembrane region" description="Helical" evidence="1">
    <location>
        <begin position="279"/>
        <end position="300"/>
    </location>
</feature>
<feature type="transmembrane region" description="Helical" evidence="1">
    <location>
        <begin position="435"/>
        <end position="459"/>
    </location>
</feature>
<feature type="binding site" evidence="1">
    <location>
        <position position="355"/>
    </location>
    <ligand>
        <name>[CaMn4O5] cluster</name>
        <dbReference type="ChEBI" id="CHEBI:189552"/>
    </ligand>
</feature>
<feature type="modified residue" description="N-acetylthreonine" evidence="1">
    <location>
        <position position="3"/>
    </location>
</feature>
<feature type="modified residue" description="Phosphothreonine" evidence="1">
    <location>
        <position position="3"/>
    </location>
</feature>
<feature type="mutagenesis site" description="In MA16; destabilizes protein leading to loss of PSII." evidence="3">
    <original>S</original>
    <variation>SLS</variation>
    <location>
        <position position="261"/>
    </location>
</feature>
<feature type="helix" evidence="6">
    <location>
        <begin position="16"/>
        <end position="19"/>
    </location>
</feature>
<feature type="helix" evidence="6">
    <location>
        <begin position="23"/>
        <end position="30"/>
    </location>
</feature>
<feature type="helix" evidence="6">
    <location>
        <begin position="34"/>
        <end position="61"/>
    </location>
</feature>
<feature type="helix" evidence="6">
    <location>
        <begin position="69"/>
        <end position="71"/>
    </location>
</feature>
<feature type="helix" evidence="6">
    <location>
        <begin position="77"/>
        <end position="82"/>
    </location>
</feature>
<feature type="strand" evidence="6">
    <location>
        <begin position="85"/>
        <end position="87"/>
    </location>
</feature>
<feature type="helix" evidence="6">
    <location>
        <begin position="89"/>
        <end position="91"/>
    </location>
</feature>
<feature type="helix" evidence="6">
    <location>
        <begin position="97"/>
        <end position="122"/>
    </location>
</feature>
<feature type="turn" evidence="6">
    <location>
        <begin position="129"/>
        <end position="131"/>
    </location>
</feature>
<feature type="turn" evidence="6">
    <location>
        <begin position="133"/>
        <end position="135"/>
    </location>
</feature>
<feature type="helix" evidence="6">
    <location>
        <begin position="144"/>
        <end position="169"/>
    </location>
</feature>
<feature type="strand" evidence="6">
    <location>
        <begin position="173"/>
        <end position="175"/>
    </location>
</feature>
<feature type="helix" evidence="7">
    <location>
        <begin position="179"/>
        <end position="181"/>
    </location>
</feature>
<feature type="strand" evidence="6">
    <location>
        <begin position="183"/>
        <end position="185"/>
    </location>
</feature>
<feature type="helix" evidence="6">
    <location>
        <begin position="194"/>
        <end position="199"/>
    </location>
</feature>
<feature type="turn" evidence="6">
    <location>
        <begin position="200"/>
        <end position="202"/>
    </location>
</feature>
<feature type="turn" evidence="6">
    <location>
        <begin position="207"/>
        <end position="209"/>
    </location>
</feature>
<feature type="turn" evidence="6">
    <location>
        <begin position="211"/>
        <end position="214"/>
    </location>
</feature>
<feature type="helix" evidence="6">
    <location>
        <begin position="218"/>
        <end position="240"/>
    </location>
</feature>
<feature type="helix" evidence="6">
    <location>
        <begin position="246"/>
        <end position="251"/>
    </location>
</feature>
<feature type="strand" evidence="5">
    <location>
        <begin position="253"/>
        <end position="255"/>
    </location>
</feature>
<feature type="helix" evidence="6">
    <location>
        <begin position="256"/>
        <end position="280"/>
    </location>
</feature>
<feature type="strand" evidence="6">
    <location>
        <begin position="283"/>
        <end position="285"/>
    </location>
</feature>
<feature type="helix" evidence="6">
    <location>
        <begin position="287"/>
        <end position="290"/>
    </location>
</feature>
<feature type="helix" evidence="6">
    <location>
        <begin position="294"/>
        <end position="312"/>
    </location>
</feature>
<feature type="turn" evidence="5">
    <location>
        <begin position="316"/>
        <end position="318"/>
    </location>
</feature>
<feature type="strand" evidence="5">
    <location>
        <begin position="322"/>
        <end position="325"/>
    </location>
</feature>
<feature type="strand" evidence="6">
    <location>
        <begin position="328"/>
        <end position="331"/>
    </location>
</feature>
<feature type="strand" evidence="6">
    <location>
        <begin position="337"/>
        <end position="339"/>
    </location>
</feature>
<feature type="helix" evidence="6">
    <location>
        <begin position="342"/>
        <end position="346"/>
    </location>
</feature>
<feature type="turn" evidence="6">
    <location>
        <begin position="352"/>
        <end position="354"/>
    </location>
</feature>
<feature type="helix" evidence="6">
    <location>
        <begin position="355"/>
        <end position="357"/>
    </location>
</feature>
<feature type="strand" evidence="6">
    <location>
        <begin position="360"/>
        <end position="363"/>
    </location>
</feature>
<feature type="helix" evidence="6">
    <location>
        <begin position="365"/>
        <end position="370"/>
    </location>
</feature>
<feature type="helix" evidence="6">
    <location>
        <begin position="374"/>
        <end position="384"/>
    </location>
</feature>
<feature type="strand" evidence="7">
    <location>
        <begin position="392"/>
        <end position="395"/>
    </location>
</feature>
<feature type="strand" evidence="7">
    <location>
        <begin position="398"/>
        <end position="400"/>
    </location>
</feature>
<feature type="helix" evidence="6">
    <location>
        <begin position="410"/>
        <end position="441"/>
    </location>
</feature>
<feature type="strand" evidence="6">
    <location>
        <begin position="449"/>
        <end position="451"/>
    </location>
</feature>
<feature type="helix" evidence="6">
    <location>
        <begin position="453"/>
        <end position="456"/>
    </location>
</feature>
<geneLocation type="chloroplast"/>
<evidence type="ECO:0000255" key="1">
    <source>
        <dbReference type="HAMAP-Rule" id="MF_01496"/>
    </source>
</evidence>
<evidence type="ECO:0000269" key="2">
    <source>
    </source>
</evidence>
<evidence type="ECO:0000269" key="3">
    <source>
    </source>
</evidence>
<evidence type="ECO:0000303" key="4">
    <source>
    </source>
</evidence>
<evidence type="ECO:0007829" key="5">
    <source>
        <dbReference type="PDB" id="6KAC"/>
    </source>
</evidence>
<evidence type="ECO:0007829" key="6">
    <source>
        <dbReference type="PDB" id="8KDE"/>
    </source>
</evidence>
<evidence type="ECO:0007829" key="7">
    <source>
        <dbReference type="PDB" id="8R2I"/>
    </source>
</evidence>
<keyword id="KW-0002">3D-structure</keyword>
<keyword id="KW-0007">Acetylation</keyword>
<keyword id="KW-0148">Chlorophyll</keyword>
<keyword id="KW-0150">Chloroplast</keyword>
<keyword id="KW-0157">Chromophore</keyword>
<keyword id="KW-0464">Manganese</keyword>
<keyword id="KW-0472">Membrane</keyword>
<keyword id="KW-0479">Metal-binding</keyword>
<keyword id="KW-0597">Phosphoprotein</keyword>
<keyword id="KW-0602">Photosynthesis</keyword>
<keyword id="KW-0604">Photosystem II</keyword>
<keyword id="KW-0934">Plastid</keyword>
<keyword id="KW-1185">Reference proteome</keyword>
<keyword id="KW-0793">Thylakoid</keyword>
<keyword id="KW-0812">Transmembrane</keyword>
<keyword id="KW-1133">Transmembrane helix</keyword>